<sequence>MIILKQMYVHDGRKFEALTIRNYTETDIERLISLQEECFPPPFPQELLWSEDQLASHIKTFPEGALCALINGRIIGSMTALIVQFEPDSPDHTWAQATDNGSIKNHEPHGNTLYVVDISVSPHYRKLGIGKWLMNTMYELTVDKRLERLLGGGRIPLYYKYAHEISAVQYVEDVMEGRKNDPVLSFLLRCGRSPIRVVSNYLEDKESLNYGVLMEWKNVFYKKASC</sequence>
<dbReference type="EC" id="2.3.1.-"/>
<dbReference type="EMBL" id="X97385">
    <property type="protein sequence ID" value="CAA66051.1"/>
    <property type="molecule type" value="Genomic_DNA"/>
</dbReference>
<dbReference type="EMBL" id="AL009126">
    <property type="protein sequence ID" value="CAB13267.2"/>
    <property type="molecule type" value="Genomic_DNA"/>
</dbReference>
<dbReference type="PIR" id="A69870">
    <property type="entry name" value="A69870"/>
</dbReference>
<dbReference type="RefSeq" id="NP_389277.2">
    <property type="nucleotide sequence ID" value="NC_000964.3"/>
</dbReference>
<dbReference type="RefSeq" id="WP_003245627.1">
    <property type="nucleotide sequence ID" value="NZ_OZ025638.1"/>
</dbReference>
<dbReference type="SMR" id="Q796K9"/>
<dbReference type="FunCoup" id="Q796K9">
    <property type="interactions" value="48"/>
</dbReference>
<dbReference type="STRING" id="224308.BSU13940"/>
<dbReference type="PaxDb" id="224308-BSU13940"/>
<dbReference type="EnsemblBacteria" id="CAB13267">
    <property type="protein sequence ID" value="CAB13267"/>
    <property type="gene ID" value="BSU_13940"/>
</dbReference>
<dbReference type="GeneID" id="939246"/>
<dbReference type="KEGG" id="bsu:BSU13940"/>
<dbReference type="PATRIC" id="fig|224308.179.peg.1520"/>
<dbReference type="eggNOG" id="COG0456">
    <property type="taxonomic scope" value="Bacteria"/>
</dbReference>
<dbReference type="InParanoid" id="Q796K9"/>
<dbReference type="OrthoDB" id="9811121at2"/>
<dbReference type="BioCyc" id="BSUB:BSU13940-MONOMER"/>
<dbReference type="Proteomes" id="UP000001570">
    <property type="component" value="Chromosome"/>
</dbReference>
<dbReference type="GO" id="GO:0016747">
    <property type="term" value="F:acyltransferase activity, transferring groups other than amino-acyl groups"/>
    <property type="evidence" value="ECO:0000318"/>
    <property type="project" value="GO_Central"/>
</dbReference>
<dbReference type="CDD" id="cd04301">
    <property type="entry name" value="NAT_SF"/>
    <property type="match status" value="1"/>
</dbReference>
<dbReference type="Gene3D" id="3.40.630.30">
    <property type="match status" value="1"/>
</dbReference>
<dbReference type="InterPro" id="IPR016181">
    <property type="entry name" value="Acyl_CoA_acyltransferase"/>
</dbReference>
<dbReference type="InterPro" id="IPR000182">
    <property type="entry name" value="GNAT_dom"/>
</dbReference>
<dbReference type="Pfam" id="PF00583">
    <property type="entry name" value="Acetyltransf_1"/>
    <property type="match status" value="1"/>
</dbReference>
<dbReference type="SUPFAM" id="SSF55729">
    <property type="entry name" value="Acyl-CoA N-acyltransferases (Nat)"/>
    <property type="match status" value="1"/>
</dbReference>
<dbReference type="PROSITE" id="PS51186">
    <property type="entry name" value="GNAT"/>
    <property type="match status" value="1"/>
</dbReference>
<name>YKWB_BACSU</name>
<feature type="chain" id="PRO_0000360498" description="Uncharacterized N-acetyltransferase YkwB">
    <location>
        <begin position="1"/>
        <end position="226"/>
    </location>
</feature>
<feature type="domain" description="N-acetyltransferase" evidence="1">
    <location>
        <begin position="18"/>
        <end position="219"/>
    </location>
</feature>
<protein>
    <recommendedName>
        <fullName>Uncharacterized N-acetyltransferase YkwB</fullName>
        <ecNumber>2.3.1.-</ecNumber>
    </recommendedName>
</protein>
<keyword id="KW-0012">Acyltransferase</keyword>
<keyword id="KW-1185">Reference proteome</keyword>
<keyword id="KW-0808">Transferase</keyword>
<accession>Q796K9</accession>
<accession>O05187</accession>
<accession>O31693</accession>
<proteinExistence type="inferred from homology"/>
<comment type="similarity">
    <text evidence="2">Belongs to the acetyltransferase family.</text>
</comment>
<reference key="1">
    <citation type="journal article" date="1997" name="Microbiology">
        <title>Functional and genetic characterization of mcpC, which encodes a third methyl-accepting chemotaxis protein in Bacillus subtilis.</title>
        <authorList>
            <person name="Mueller J."/>
            <person name="Schiel S."/>
            <person name="Ordal G.W."/>
            <person name="Saxild H.H."/>
        </authorList>
    </citation>
    <scope>NUCLEOTIDE SEQUENCE [GENOMIC DNA]</scope>
    <source>
        <strain>168</strain>
    </source>
</reference>
<reference key="2">
    <citation type="journal article" date="1997" name="Nature">
        <title>The complete genome sequence of the Gram-positive bacterium Bacillus subtilis.</title>
        <authorList>
            <person name="Kunst F."/>
            <person name="Ogasawara N."/>
            <person name="Moszer I."/>
            <person name="Albertini A.M."/>
            <person name="Alloni G."/>
            <person name="Azevedo V."/>
            <person name="Bertero M.G."/>
            <person name="Bessieres P."/>
            <person name="Bolotin A."/>
            <person name="Borchert S."/>
            <person name="Borriss R."/>
            <person name="Boursier L."/>
            <person name="Brans A."/>
            <person name="Braun M."/>
            <person name="Brignell S.C."/>
            <person name="Bron S."/>
            <person name="Brouillet S."/>
            <person name="Bruschi C.V."/>
            <person name="Caldwell B."/>
            <person name="Capuano V."/>
            <person name="Carter N.M."/>
            <person name="Choi S.-K."/>
            <person name="Codani J.-J."/>
            <person name="Connerton I.F."/>
            <person name="Cummings N.J."/>
            <person name="Daniel R.A."/>
            <person name="Denizot F."/>
            <person name="Devine K.M."/>
            <person name="Duesterhoeft A."/>
            <person name="Ehrlich S.D."/>
            <person name="Emmerson P.T."/>
            <person name="Entian K.-D."/>
            <person name="Errington J."/>
            <person name="Fabret C."/>
            <person name="Ferrari E."/>
            <person name="Foulger D."/>
            <person name="Fritz C."/>
            <person name="Fujita M."/>
            <person name="Fujita Y."/>
            <person name="Fuma S."/>
            <person name="Galizzi A."/>
            <person name="Galleron N."/>
            <person name="Ghim S.-Y."/>
            <person name="Glaser P."/>
            <person name="Goffeau A."/>
            <person name="Golightly E.J."/>
            <person name="Grandi G."/>
            <person name="Guiseppi G."/>
            <person name="Guy B.J."/>
            <person name="Haga K."/>
            <person name="Haiech J."/>
            <person name="Harwood C.R."/>
            <person name="Henaut A."/>
            <person name="Hilbert H."/>
            <person name="Holsappel S."/>
            <person name="Hosono S."/>
            <person name="Hullo M.-F."/>
            <person name="Itaya M."/>
            <person name="Jones L.-M."/>
            <person name="Joris B."/>
            <person name="Karamata D."/>
            <person name="Kasahara Y."/>
            <person name="Klaerr-Blanchard M."/>
            <person name="Klein C."/>
            <person name="Kobayashi Y."/>
            <person name="Koetter P."/>
            <person name="Koningstein G."/>
            <person name="Krogh S."/>
            <person name="Kumano M."/>
            <person name="Kurita K."/>
            <person name="Lapidus A."/>
            <person name="Lardinois S."/>
            <person name="Lauber J."/>
            <person name="Lazarevic V."/>
            <person name="Lee S.-M."/>
            <person name="Levine A."/>
            <person name="Liu H."/>
            <person name="Masuda S."/>
            <person name="Mauel C."/>
            <person name="Medigue C."/>
            <person name="Medina N."/>
            <person name="Mellado R.P."/>
            <person name="Mizuno M."/>
            <person name="Moestl D."/>
            <person name="Nakai S."/>
            <person name="Noback M."/>
            <person name="Noone D."/>
            <person name="O'Reilly M."/>
            <person name="Ogawa K."/>
            <person name="Ogiwara A."/>
            <person name="Oudega B."/>
            <person name="Park S.-H."/>
            <person name="Parro V."/>
            <person name="Pohl T.M."/>
            <person name="Portetelle D."/>
            <person name="Porwollik S."/>
            <person name="Prescott A.M."/>
            <person name="Presecan E."/>
            <person name="Pujic P."/>
            <person name="Purnelle B."/>
            <person name="Rapoport G."/>
            <person name="Rey M."/>
            <person name="Reynolds S."/>
            <person name="Rieger M."/>
            <person name="Rivolta C."/>
            <person name="Rocha E."/>
            <person name="Roche B."/>
            <person name="Rose M."/>
            <person name="Sadaie Y."/>
            <person name="Sato T."/>
            <person name="Scanlan E."/>
            <person name="Schleich S."/>
            <person name="Schroeter R."/>
            <person name="Scoffone F."/>
            <person name="Sekiguchi J."/>
            <person name="Sekowska A."/>
            <person name="Seror S.J."/>
            <person name="Serror P."/>
            <person name="Shin B.-S."/>
            <person name="Soldo B."/>
            <person name="Sorokin A."/>
            <person name="Tacconi E."/>
            <person name="Takagi T."/>
            <person name="Takahashi H."/>
            <person name="Takemaru K."/>
            <person name="Takeuchi M."/>
            <person name="Tamakoshi A."/>
            <person name="Tanaka T."/>
            <person name="Terpstra P."/>
            <person name="Tognoni A."/>
            <person name="Tosato V."/>
            <person name="Uchiyama S."/>
            <person name="Vandenbol M."/>
            <person name="Vannier F."/>
            <person name="Vassarotti A."/>
            <person name="Viari A."/>
            <person name="Wambutt R."/>
            <person name="Wedler E."/>
            <person name="Wedler H."/>
            <person name="Weitzenegger T."/>
            <person name="Winters P."/>
            <person name="Wipat A."/>
            <person name="Yamamoto H."/>
            <person name="Yamane K."/>
            <person name="Yasumoto K."/>
            <person name="Yata K."/>
            <person name="Yoshida K."/>
            <person name="Yoshikawa H.-F."/>
            <person name="Zumstein E."/>
            <person name="Yoshikawa H."/>
            <person name="Danchin A."/>
        </authorList>
    </citation>
    <scope>NUCLEOTIDE SEQUENCE [LARGE SCALE GENOMIC DNA]</scope>
    <source>
        <strain>168</strain>
    </source>
</reference>
<reference key="3">
    <citation type="journal article" date="2009" name="Microbiology">
        <title>From a consortium sequence to a unified sequence: the Bacillus subtilis 168 reference genome a decade later.</title>
        <authorList>
            <person name="Barbe V."/>
            <person name="Cruveiller S."/>
            <person name="Kunst F."/>
            <person name="Lenoble P."/>
            <person name="Meurice G."/>
            <person name="Sekowska A."/>
            <person name="Vallenet D."/>
            <person name="Wang T."/>
            <person name="Moszer I."/>
            <person name="Medigue C."/>
            <person name="Danchin A."/>
        </authorList>
    </citation>
    <scope>SEQUENCE REVISION TO C-TERMINUS</scope>
</reference>
<gene>
    <name type="primary">ykwB</name>
    <name type="ordered locus">BSU13940</name>
</gene>
<organism>
    <name type="scientific">Bacillus subtilis (strain 168)</name>
    <dbReference type="NCBI Taxonomy" id="224308"/>
    <lineage>
        <taxon>Bacteria</taxon>
        <taxon>Bacillati</taxon>
        <taxon>Bacillota</taxon>
        <taxon>Bacilli</taxon>
        <taxon>Bacillales</taxon>
        <taxon>Bacillaceae</taxon>
        <taxon>Bacillus</taxon>
    </lineage>
</organism>
<evidence type="ECO:0000255" key="1">
    <source>
        <dbReference type="PROSITE-ProRule" id="PRU00532"/>
    </source>
</evidence>
<evidence type="ECO:0000305" key="2"/>